<protein>
    <recommendedName>
        <fullName>Peptide methionine sulfoxide reductase MsrA 1</fullName>
        <shortName>Protein-methionine-S-oxide reductase 1</shortName>
        <ecNumber>1.8.4.11</ecNumber>
    </recommendedName>
    <alternativeName>
        <fullName>Peptide-methionine (S)-S-oxide reductase 1</fullName>
        <shortName>Peptide Met(O) reductase 1</shortName>
    </alternativeName>
</protein>
<reference key="1">
    <citation type="journal article" date="2001" name="Lancet">
        <title>Whole genome sequencing of meticillin-resistant Staphylococcus aureus.</title>
        <authorList>
            <person name="Kuroda M."/>
            <person name="Ohta T."/>
            <person name="Uchiyama I."/>
            <person name="Baba T."/>
            <person name="Yuzawa H."/>
            <person name="Kobayashi I."/>
            <person name="Cui L."/>
            <person name="Oguchi A."/>
            <person name="Aoki K."/>
            <person name="Nagai Y."/>
            <person name="Lian J.-Q."/>
            <person name="Ito T."/>
            <person name="Kanamori M."/>
            <person name="Matsumaru H."/>
            <person name="Maruyama A."/>
            <person name="Murakami H."/>
            <person name="Hosoyama A."/>
            <person name="Mizutani-Ui Y."/>
            <person name="Takahashi N.K."/>
            <person name="Sawano T."/>
            <person name="Inoue R."/>
            <person name="Kaito C."/>
            <person name="Sekimizu K."/>
            <person name="Hirakawa H."/>
            <person name="Kuhara S."/>
            <person name="Goto S."/>
            <person name="Yabuzaki J."/>
            <person name="Kanehisa M."/>
            <person name="Yamashita A."/>
            <person name="Oshima K."/>
            <person name="Furuya K."/>
            <person name="Yoshino C."/>
            <person name="Shiba T."/>
            <person name="Hattori M."/>
            <person name="Ogasawara N."/>
            <person name="Hayashi H."/>
            <person name="Hiramatsu K."/>
        </authorList>
    </citation>
    <scope>NUCLEOTIDE SEQUENCE [LARGE SCALE GENOMIC DNA]</scope>
    <source>
        <strain>Mu50 / ATCC 700699</strain>
    </source>
</reference>
<reference key="2">
    <citation type="journal article" date="2002" name="Biochem. Biophys. Res. Commun.">
        <title>Purification and characterization of methionine sulfoxide reductases from mouse and Staphylococcus aureus and their substrate stereospecificity.</title>
        <authorList>
            <person name="Moskovitz J."/>
            <person name="Singh V.K."/>
            <person name="Requena J."/>
            <person name="Wilkinson B.J."/>
            <person name="Jayaswal R.K."/>
            <person name="Stadtman E.R."/>
        </authorList>
    </citation>
    <scope>CATALYTIC ACTIVITY</scope>
    <scope>STEREOSPECIFICITY</scope>
</reference>
<accession>P0A081</accession>
<accession>Q99QD5</accession>
<gene>
    <name type="primary">msrA1</name>
    <name type="synonym">msrA</name>
    <name type="ordered locus">SAV1361</name>
</gene>
<organism>
    <name type="scientific">Staphylococcus aureus (strain Mu50 / ATCC 700699)</name>
    <dbReference type="NCBI Taxonomy" id="158878"/>
    <lineage>
        <taxon>Bacteria</taxon>
        <taxon>Bacillati</taxon>
        <taxon>Bacillota</taxon>
        <taxon>Bacilli</taxon>
        <taxon>Bacillales</taxon>
        <taxon>Staphylococcaceae</taxon>
        <taxon>Staphylococcus</taxon>
    </lineage>
</organism>
<dbReference type="EC" id="1.8.4.11"/>
<dbReference type="EMBL" id="BA000017">
    <property type="protein sequence ID" value="BAB57523.1"/>
    <property type="molecule type" value="Genomic_DNA"/>
</dbReference>
<dbReference type="RefSeq" id="WP_001024830.1">
    <property type="nucleotide sequence ID" value="NC_002758.2"/>
</dbReference>
<dbReference type="SMR" id="P0A081"/>
<dbReference type="KEGG" id="sav:SAV1361"/>
<dbReference type="HOGENOM" id="CLU_031040_10_1_9"/>
<dbReference type="PhylomeDB" id="P0A081"/>
<dbReference type="Proteomes" id="UP000002481">
    <property type="component" value="Chromosome"/>
</dbReference>
<dbReference type="GO" id="GO:0033744">
    <property type="term" value="F:L-methionine:thioredoxin-disulfide S-oxidoreductase activity"/>
    <property type="evidence" value="ECO:0007669"/>
    <property type="project" value="RHEA"/>
</dbReference>
<dbReference type="GO" id="GO:0008113">
    <property type="term" value="F:peptide-methionine (S)-S-oxide reductase activity"/>
    <property type="evidence" value="ECO:0007669"/>
    <property type="project" value="UniProtKB-UniRule"/>
</dbReference>
<dbReference type="GO" id="GO:0036211">
    <property type="term" value="P:protein modification process"/>
    <property type="evidence" value="ECO:0007669"/>
    <property type="project" value="UniProtKB-UniRule"/>
</dbReference>
<dbReference type="FunFam" id="3.30.1060.10:FF:000003">
    <property type="entry name" value="Peptide methionine sulfoxide reductase MsrA"/>
    <property type="match status" value="1"/>
</dbReference>
<dbReference type="Gene3D" id="3.30.1060.10">
    <property type="entry name" value="Peptide methionine sulphoxide reductase MsrA"/>
    <property type="match status" value="1"/>
</dbReference>
<dbReference type="HAMAP" id="MF_01401">
    <property type="entry name" value="MsrA"/>
    <property type="match status" value="1"/>
</dbReference>
<dbReference type="InterPro" id="IPR002569">
    <property type="entry name" value="Met_Sox_Rdtase_MsrA_dom"/>
</dbReference>
<dbReference type="InterPro" id="IPR036509">
    <property type="entry name" value="Met_Sox_Rdtase_MsrA_sf"/>
</dbReference>
<dbReference type="NCBIfam" id="TIGR00401">
    <property type="entry name" value="msrA"/>
    <property type="match status" value="1"/>
</dbReference>
<dbReference type="PANTHER" id="PTHR43774">
    <property type="entry name" value="PEPTIDE METHIONINE SULFOXIDE REDUCTASE"/>
    <property type="match status" value="1"/>
</dbReference>
<dbReference type="PANTHER" id="PTHR43774:SF1">
    <property type="entry name" value="PEPTIDE METHIONINE SULFOXIDE REDUCTASE MSRA 2"/>
    <property type="match status" value="1"/>
</dbReference>
<dbReference type="Pfam" id="PF01625">
    <property type="entry name" value="PMSR"/>
    <property type="match status" value="1"/>
</dbReference>
<dbReference type="SUPFAM" id="SSF55068">
    <property type="entry name" value="Peptide methionine sulfoxide reductase"/>
    <property type="match status" value="1"/>
</dbReference>
<name>MSRA1_STAAM</name>
<proteinExistence type="evidence at protein level"/>
<keyword id="KW-0560">Oxidoreductase</keyword>
<feature type="chain" id="PRO_0000138581" description="Peptide methionine sulfoxide reductase MsrA 1">
    <location>
        <begin position="1"/>
        <end position="169"/>
    </location>
</feature>
<feature type="active site" evidence="1">
    <location>
        <position position="12"/>
    </location>
</feature>
<sequence length="169" mass="19611">MNINTAYFAGGCFWCMTKPFDTFDGIEKVTSGYMGGHIENPTYEQVKSGTSGHLETVEIQYDVALFSYNKLLEIFFSVIDPLDTGGQYQDRGPQYQTAIFYTNDHQKELAETYIEQLKNTINADKAIATKILPASQFYKAEDYHQDFYKKNPERYAEEQKIRQEYKNKQ</sequence>
<evidence type="ECO:0000250" key="1"/>
<evidence type="ECO:0000269" key="2">
    <source>
    </source>
</evidence>
<evidence type="ECO:0000305" key="3"/>
<comment type="function">
    <text evidence="1">Has an important function as a repair enzyme for proteins that have been inactivated by oxidation. Catalyzes the reversible oxidation-reduction of methionine sulfoxide in proteins to methionine (By similarity).</text>
</comment>
<comment type="catalytic activity">
    <reaction evidence="2">
        <text>L-methionyl-[protein] + [thioredoxin]-disulfide + H2O = L-methionyl-(S)-S-oxide-[protein] + [thioredoxin]-dithiol</text>
        <dbReference type="Rhea" id="RHEA:14217"/>
        <dbReference type="Rhea" id="RHEA-COMP:10698"/>
        <dbReference type="Rhea" id="RHEA-COMP:10700"/>
        <dbReference type="Rhea" id="RHEA-COMP:12313"/>
        <dbReference type="Rhea" id="RHEA-COMP:12315"/>
        <dbReference type="ChEBI" id="CHEBI:15377"/>
        <dbReference type="ChEBI" id="CHEBI:16044"/>
        <dbReference type="ChEBI" id="CHEBI:29950"/>
        <dbReference type="ChEBI" id="CHEBI:44120"/>
        <dbReference type="ChEBI" id="CHEBI:50058"/>
        <dbReference type="EC" id="1.8.4.11"/>
    </reaction>
</comment>
<comment type="catalytic activity">
    <reaction evidence="2">
        <text>[thioredoxin]-disulfide + L-methionine + H2O = L-methionine (S)-S-oxide + [thioredoxin]-dithiol</text>
        <dbReference type="Rhea" id="RHEA:19993"/>
        <dbReference type="Rhea" id="RHEA-COMP:10698"/>
        <dbReference type="Rhea" id="RHEA-COMP:10700"/>
        <dbReference type="ChEBI" id="CHEBI:15377"/>
        <dbReference type="ChEBI" id="CHEBI:29950"/>
        <dbReference type="ChEBI" id="CHEBI:50058"/>
        <dbReference type="ChEBI" id="CHEBI:57844"/>
        <dbReference type="ChEBI" id="CHEBI:58772"/>
        <dbReference type="EC" id="1.8.4.11"/>
    </reaction>
</comment>
<comment type="miscellaneous">
    <text>Stereospecific for the S isomer of MetO.</text>
</comment>
<comment type="similarity">
    <text evidence="3">Belongs to the MsrA Met sulfoxide reductase family.</text>
</comment>